<feature type="chain" id="PRO_0000228507" description="Ribonuclease 3">
    <location>
        <begin position="1"/>
        <end position="256"/>
    </location>
</feature>
<feature type="domain" description="RNase III" evidence="1">
    <location>
        <begin position="6"/>
        <end position="128"/>
    </location>
</feature>
<feature type="domain" description="DRBM" evidence="1">
    <location>
        <begin position="155"/>
        <end position="225"/>
    </location>
</feature>
<feature type="active site" evidence="1">
    <location>
        <position position="45"/>
    </location>
</feature>
<feature type="active site" evidence="1">
    <location>
        <position position="117"/>
    </location>
</feature>
<feature type="binding site" evidence="1">
    <location>
        <position position="41"/>
    </location>
    <ligand>
        <name>Mg(2+)</name>
        <dbReference type="ChEBI" id="CHEBI:18420"/>
    </ligand>
</feature>
<feature type="binding site" evidence="1">
    <location>
        <position position="114"/>
    </location>
    <ligand>
        <name>Mg(2+)</name>
        <dbReference type="ChEBI" id="CHEBI:18420"/>
    </ligand>
</feature>
<feature type="binding site" evidence="1">
    <location>
        <position position="117"/>
    </location>
    <ligand>
        <name>Mg(2+)</name>
        <dbReference type="ChEBI" id="CHEBI:18420"/>
    </ligand>
</feature>
<organism>
    <name type="scientific">Bordetella pertussis (strain Tohama I / ATCC BAA-589 / NCTC 13251)</name>
    <dbReference type="NCBI Taxonomy" id="257313"/>
    <lineage>
        <taxon>Bacteria</taxon>
        <taxon>Pseudomonadati</taxon>
        <taxon>Pseudomonadota</taxon>
        <taxon>Betaproteobacteria</taxon>
        <taxon>Burkholderiales</taxon>
        <taxon>Alcaligenaceae</taxon>
        <taxon>Bordetella</taxon>
    </lineage>
</organism>
<comment type="function">
    <text evidence="1">Digests double-stranded RNA. Involved in the processing of primary rRNA transcript to yield the immediate precursors to the large and small rRNAs (23S and 16S). Processes some mRNAs, and tRNAs when they are encoded in the rRNA operon. Processes pre-crRNA and tracrRNA of type II CRISPR loci if present in the organism.</text>
</comment>
<comment type="catalytic activity">
    <reaction evidence="1">
        <text>Endonucleolytic cleavage to 5'-phosphomonoester.</text>
        <dbReference type="EC" id="3.1.26.3"/>
    </reaction>
</comment>
<comment type="cofactor">
    <cofactor evidence="1">
        <name>Mg(2+)</name>
        <dbReference type="ChEBI" id="CHEBI:18420"/>
    </cofactor>
</comment>
<comment type="subunit">
    <text evidence="1">Homodimer.</text>
</comment>
<comment type="subcellular location">
    <subcellularLocation>
        <location evidence="1">Cytoplasm</location>
    </subcellularLocation>
</comment>
<comment type="similarity">
    <text evidence="1">Belongs to the ribonuclease III family.</text>
</comment>
<sequence length="256" mass="27829">MTAMSLATLETRLDHRFGDKALLEQALTHRSHGARHNERLEFLGDSVLNFVVAAMLFERYGKLDEGDLSRLRANLVKQASLADIAQRLDLSQYLRLGEGELKSGGFRRPSILADTVEALFGAVFLDAGFEAARRVIVRQYQPVMAHVDPKTLGKDAKTLLQEFLQGRKLALPQYTVVATHGAAHSQQFEVECAIPALEIKIVAPGASRRAAEQSAAKVALEAAQAVLPAARAARKSGKARKTAQLSLPVAVAQEVK</sequence>
<evidence type="ECO:0000255" key="1">
    <source>
        <dbReference type="HAMAP-Rule" id="MF_00104"/>
    </source>
</evidence>
<protein>
    <recommendedName>
        <fullName evidence="1">Ribonuclease 3</fullName>
        <ecNumber evidence="1">3.1.26.3</ecNumber>
    </recommendedName>
    <alternativeName>
        <fullName evidence="1">Ribonuclease III</fullName>
        <shortName evidence="1">RNase III</shortName>
    </alternativeName>
</protein>
<proteinExistence type="inferred from homology"/>
<name>RNC_BORPE</name>
<dbReference type="EC" id="3.1.26.3" evidence="1"/>
<dbReference type="EMBL" id="BX640418">
    <property type="protein sequence ID" value="CAE42703.1"/>
    <property type="molecule type" value="Genomic_DNA"/>
</dbReference>
<dbReference type="RefSeq" id="NP_881059.1">
    <property type="nucleotide sequence ID" value="NC_002929.2"/>
</dbReference>
<dbReference type="SMR" id="Q7VW39"/>
<dbReference type="STRING" id="257313.BP2431"/>
<dbReference type="PaxDb" id="257313-BP2431"/>
<dbReference type="KEGG" id="bpe:BP2431"/>
<dbReference type="PATRIC" id="fig|257313.5.peg.2621"/>
<dbReference type="eggNOG" id="COG0571">
    <property type="taxonomic scope" value="Bacteria"/>
</dbReference>
<dbReference type="HOGENOM" id="CLU_000907_1_1_4"/>
<dbReference type="Proteomes" id="UP000002676">
    <property type="component" value="Chromosome"/>
</dbReference>
<dbReference type="GO" id="GO:0005737">
    <property type="term" value="C:cytoplasm"/>
    <property type="evidence" value="ECO:0007669"/>
    <property type="project" value="UniProtKB-SubCell"/>
</dbReference>
<dbReference type="GO" id="GO:0003725">
    <property type="term" value="F:double-stranded RNA binding"/>
    <property type="evidence" value="ECO:0007669"/>
    <property type="project" value="TreeGrafter"/>
</dbReference>
<dbReference type="GO" id="GO:0046872">
    <property type="term" value="F:metal ion binding"/>
    <property type="evidence" value="ECO:0007669"/>
    <property type="project" value="UniProtKB-KW"/>
</dbReference>
<dbReference type="GO" id="GO:0004525">
    <property type="term" value="F:ribonuclease III activity"/>
    <property type="evidence" value="ECO:0007669"/>
    <property type="project" value="UniProtKB-UniRule"/>
</dbReference>
<dbReference type="GO" id="GO:0019843">
    <property type="term" value="F:rRNA binding"/>
    <property type="evidence" value="ECO:0007669"/>
    <property type="project" value="UniProtKB-KW"/>
</dbReference>
<dbReference type="GO" id="GO:0006397">
    <property type="term" value="P:mRNA processing"/>
    <property type="evidence" value="ECO:0007669"/>
    <property type="project" value="UniProtKB-UniRule"/>
</dbReference>
<dbReference type="GO" id="GO:0010468">
    <property type="term" value="P:regulation of gene expression"/>
    <property type="evidence" value="ECO:0007669"/>
    <property type="project" value="TreeGrafter"/>
</dbReference>
<dbReference type="GO" id="GO:0006364">
    <property type="term" value="P:rRNA processing"/>
    <property type="evidence" value="ECO:0007669"/>
    <property type="project" value="UniProtKB-UniRule"/>
</dbReference>
<dbReference type="GO" id="GO:0008033">
    <property type="term" value="P:tRNA processing"/>
    <property type="evidence" value="ECO:0007669"/>
    <property type="project" value="UniProtKB-KW"/>
</dbReference>
<dbReference type="CDD" id="cd10845">
    <property type="entry name" value="DSRM_RNAse_III_family"/>
    <property type="match status" value="1"/>
</dbReference>
<dbReference type="CDD" id="cd00593">
    <property type="entry name" value="RIBOc"/>
    <property type="match status" value="1"/>
</dbReference>
<dbReference type="FunFam" id="1.10.1520.10:FF:000001">
    <property type="entry name" value="Ribonuclease 3"/>
    <property type="match status" value="1"/>
</dbReference>
<dbReference type="Gene3D" id="3.30.160.20">
    <property type="match status" value="1"/>
</dbReference>
<dbReference type="Gene3D" id="1.10.1520.10">
    <property type="entry name" value="Ribonuclease III domain"/>
    <property type="match status" value="1"/>
</dbReference>
<dbReference type="HAMAP" id="MF_00104">
    <property type="entry name" value="RNase_III"/>
    <property type="match status" value="1"/>
</dbReference>
<dbReference type="InterPro" id="IPR014720">
    <property type="entry name" value="dsRBD_dom"/>
</dbReference>
<dbReference type="InterPro" id="IPR011907">
    <property type="entry name" value="RNase_III"/>
</dbReference>
<dbReference type="InterPro" id="IPR000999">
    <property type="entry name" value="RNase_III_dom"/>
</dbReference>
<dbReference type="InterPro" id="IPR036389">
    <property type="entry name" value="RNase_III_sf"/>
</dbReference>
<dbReference type="NCBIfam" id="TIGR02191">
    <property type="entry name" value="RNaseIII"/>
    <property type="match status" value="1"/>
</dbReference>
<dbReference type="PANTHER" id="PTHR11207:SF0">
    <property type="entry name" value="RIBONUCLEASE 3"/>
    <property type="match status" value="1"/>
</dbReference>
<dbReference type="PANTHER" id="PTHR11207">
    <property type="entry name" value="RIBONUCLEASE III"/>
    <property type="match status" value="1"/>
</dbReference>
<dbReference type="Pfam" id="PF00035">
    <property type="entry name" value="dsrm"/>
    <property type="match status" value="1"/>
</dbReference>
<dbReference type="Pfam" id="PF14622">
    <property type="entry name" value="Ribonucleas_3_3"/>
    <property type="match status" value="1"/>
</dbReference>
<dbReference type="SMART" id="SM00358">
    <property type="entry name" value="DSRM"/>
    <property type="match status" value="1"/>
</dbReference>
<dbReference type="SMART" id="SM00535">
    <property type="entry name" value="RIBOc"/>
    <property type="match status" value="1"/>
</dbReference>
<dbReference type="SUPFAM" id="SSF54768">
    <property type="entry name" value="dsRNA-binding domain-like"/>
    <property type="match status" value="1"/>
</dbReference>
<dbReference type="SUPFAM" id="SSF69065">
    <property type="entry name" value="RNase III domain-like"/>
    <property type="match status" value="1"/>
</dbReference>
<dbReference type="PROSITE" id="PS50137">
    <property type="entry name" value="DS_RBD"/>
    <property type="match status" value="1"/>
</dbReference>
<dbReference type="PROSITE" id="PS00517">
    <property type="entry name" value="RNASE_3_1"/>
    <property type="match status" value="1"/>
</dbReference>
<dbReference type="PROSITE" id="PS50142">
    <property type="entry name" value="RNASE_3_2"/>
    <property type="match status" value="1"/>
</dbReference>
<keyword id="KW-0963">Cytoplasm</keyword>
<keyword id="KW-0255">Endonuclease</keyword>
<keyword id="KW-0378">Hydrolase</keyword>
<keyword id="KW-0460">Magnesium</keyword>
<keyword id="KW-0479">Metal-binding</keyword>
<keyword id="KW-0507">mRNA processing</keyword>
<keyword id="KW-0540">Nuclease</keyword>
<keyword id="KW-1185">Reference proteome</keyword>
<keyword id="KW-0694">RNA-binding</keyword>
<keyword id="KW-0698">rRNA processing</keyword>
<keyword id="KW-0699">rRNA-binding</keyword>
<keyword id="KW-0819">tRNA processing</keyword>
<reference key="1">
    <citation type="journal article" date="2003" name="Nat. Genet.">
        <title>Comparative analysis of the genome sequences of Bordetella pertussis, Bordetella parapertussis and Bordetella bronchiseptica.</title>
        <authorList>
            <person name="Parkhill J."/>
            <person name="Sebaihia M."/>
            <person name="Preston A."/>
            <person name="Murphy L.D."/>
            <person name="Thomson N.R."/>
            <person name="Harris D.E."/>
            <person name="Holden M.T.G."/>
            <person name="Churcher C.M."/>
            <person name="Bentley S.D."/>
            <person name="Mungall K.L."/>
            <person name="Cerdeno-Tarraga A.-M."/>
            <person name="Temple L."/>
            <person name="James K.D."/>
            <person name="Harris B."/>
            <person name="Quail M.A."/>
            <person name="Achtman M."/>
            <person name="Atkin R."/>
            <person name="Baker S."/>
            <person name="Basham D."/>
            <person name="Bason N."/>
            <person name="Cherevach I."/>
            <person name="Chillingworth T."/>
            <person name="Collins M."/>
            <person name="Cronin A."/>
            <person name="Davis P."/>
            <person name="Doggett J."/>
            <person name="Feltwell T."/>
            <person name="Goble A."/>
            <person name="Hamlin N."/>
            <person name="Hauser H."/>
            <person name="Holroyd S."/>
            <person name="Jagels K."/>
            <person name="Leather S."/>
            <person name="Moule S."/>
            <person name="Norberczak H."/>
            <person name="O'Neil S."/>
            <person name="Ormond D."/>
            <person name="Price C."/>
            <person name="Rabbinowitsch E."/>
            <person name="Rutter S."/>
            <person name="Sanders M."/>
            <person name="Saunders D."/>
            <person name="Seeger K."/>
            <person name="Sharp S."/>
            <person name="Simmonds M."/>
            <person name="Skelton J."/>
            <person name="Squares R."/>
            <person name="Squares S."/>
            <person name="Stevens K."/>
            <person name="Unwin L."/>
            <person name="Whitehead S."/>
            <person name="Barrell B.G."/>
            <person name="Maskell D.J."/>
        </authorList>
    </citation>
    <scope>NUCLEOTIDE SEQUENCE [LARGE SCALE GENOMIC DNA]</scope>
    <source>
        <strain>Tohama I / ATCC BAA-589 / NCTC 13251</strain>
    </source>
</reference>
<gene>
    <name evidence="1" type="primary">rnc</name>
    <name type="ordered locus">BP2431</name>
</gene>
<accession>Q7VW39</accession>